<gene>
    <name type="ordered locus">Pret-111</name>
</gene>
<protein>
    <recommendedName>
        <fullName evidence="2">DNA-directed RNA polymerase RPB1 homolog</fullName>
        <shortName evidence="3">RPB1 homolog</shortName>
        <ecNumber>2.7.7.6</ecNumber>
    </recommendedName>
</protein>
<keyword id="KW-0240">DNA-directed RNA polymerase</keyword>
<keyword id="KW-0548">Nucleotidyltransferase</keyword>
<keyword id="KW-0804">Transcription</keyword>
<keyword id="KW-0808">Transferase</keyword>
<keyword id="KW-1195">Viral transcription</keyword>
<keyword id="KW-0946">Virion</keyword>
<accession>P0C987</accession>
<dbReference type="EC" id="2.7.7.6"/>
<dbReference type="EMBL" id="AY261363">
    <property type="status" value="NOT_ANNOTATED_CDS"/>
    <property type="molecule type" value="Genomic_DNA"/>
</dbReference>
<dbReference type="SMR" id="P0C987"/>
<dbReference type="Proteomes" id="UP000000859">
    <property type="component" value="Segment"/>
</dbReference>
<dbReference type="GO" id="GO:0000428">
    <property type="term" value="C:DNA-directed RNA polymerase complex"/>
    <property type="evidence" value="ECO:0007669"/>
    <property type="project" value="UniProtKB-KW"/>
</dbReference>
<dbReference type="GO" id="GO:0044423">
    <property type="term" value="C:virion component"/>
    <property type="evidence" value="ECO:0007669"/>
    <property type="project" value="UniProtKB-KW"/>
</dbReference>
<dbReference type="GO" id="GO:0003677">
    <property type="term" value="F:DNA binding"/>
    <property type="evidence" value="ECO:0007669"/>
    <property type="project" value="InterPro"/>
</dbReference>
<dbReference type="GO" id="GO:0003899">
    <property type="term" value="F:DNA-directed RNA polymerase activity"/>
    <property type="evidence" value="ECO:0007669"/>
    <property type="project" value="UniProtKB-EC"/>
</dbReference>
<dbReference type="GO" id="GO:0006351">
    <property type="term" value="P:DNA-templated transcription"/>
    <property type="evidence" value="ECO:0007669"/>
    <property type="project" value="InterPro"/>
</dbReference>
<dbReference type="GO" id="GO:0019083">
    <property type="term" value="P:viral transcription"/>
    <property type="evidence" value="ECO:0007669"/>
    <property type="project" value="UniProtKB-KW"/>
</dbReference>
<dbReference type="Gene3D" id="1.10.132.30">
    <property type="match status" value="1"/>
</dbReference>
<dbReference type="Gene3D" id="2.40.40.20">
    <property type="match status" value="1"/>
</dbReference>
<dbReference type="Gene3D" id="3.30.1360.140">
    <property type="match status" value="1"/>
</dbReference>
<dbReference type="Gene3D" id="6.10.250.2940">
    <property type="match status" value="1"/>
</dbReference>
<dbReference type="Gene3D" id="3.30.1490.180">
    <property type="entry name" value="RNA polymerase ii"/>
    <property type="match status" value="1"/>
</dbReference>
<dbReference type="Gene3D" id="4.10.860.120">
    <property type="entry name" value="RNA polymerase II, clamp domain"/>
    <property type="match status" value="1"/>
</dbReference>
<dbReference type="Gene3D" id="1.10.274.100">
    <property type="entry name" value="RNA polymerase Rpb1, domain 3"/>
    <property type="match status" value="1"/>
</dbReference>
<dbReference type="InterPro" id="IPR045867">
    <property type="entry name" value="DNA-dir_RpoC_beta_prime"/>
</dbReference>
<dbReference type="InterPro" id="IPR000722">
    <property type="entry name" value="RNA_pol_asu"/>
</dbReference>
<dbReference type="InterPro" id="IPR006592">
    <property type="entry name" value="RNA_pol_N"/>
</dbReference>
<dbReference type="InterPro" id="IPR007080">
    <property type="entry name" value="RNA_pol_Rpb1_1"/>
</dbReference>
<dbReference type="InterPro" id="IPR007066">
    <property type="entry name" value="RNA_pol_Rpb1_3"/>
</dbReference>
<dbReference type="InterPro" id="IPR042102">
    <property type="entry name" value="RNA_pol_Rpb1_3_sf"/>
</dbReference>
<dbReference type="InterPro" id="IPR007083">
    <property type="entry name" value="RNA_pol_Rpb1_4"/>
</dbReference>
<dbReference type="InterPro" id="IPR007081">
    <property type="entry name" value="RNA_pol_Rpb1_5"/>
</dbReference>
<dbReference type="InterPro" id="IPR007073">
    <property type="entry name" value="RNA_pol_Rpb1_7"/>
</dbReference>
<dbReference type="InterPro" id="IPR038593">
    <property type="entry name" value="RNA_pol_Rpb1_7_sf"/>
</dbReference>
<dbReference type="InterPro" id="IPR044893">
    <property type="entry name" value="RNA_pol_Rpb1_clamp_domain"/>
</dbReference>
<dbReference type="InterPro" id="IPR038120">
    <property type="entry name" value="Rpb1_funnel_sf"/>
</dbReference>
<dbReference type="PANTHER" id="PTHR19376">
    <property type="entry name" value="DNA-DIRECTED RNA POLYMERASE"/>
    <property type="match status" value="1"/>
</dbReference>
<dbReference type="PANTHER" id="PTHR19376:SF11">
    <property type="entry name" value="DNA-DIRECTED RNA POLYMERASE I SUBUNIT RPA1"/>
    <property type="match status" value="1"/>
</dbReference>
<dbReference type="Pfam" id="PF04997">
    <property type="entry name" value="RNA_pol_Rpb1_1"/>
    <property type="match status" value="1"/>
</dbReference>
<dbReference type="Pfam" id="PF00623">
    <property type="entry name" value="RNA_pol_Rpb1_2"/>
    <property type="match status" value="1"/>
</dbReference>
<dbReference type="Pfam" id="PF04983">
    <property type="entry name" value="RNA_pol_Rpb1_3"/>
    <property type="match status" value="1"/>
</dbReference>
<dbReference type="Pfam" id="PF05000">
    <property type="entry name" value="RNA_pol_Rpb1_4"/>
    <property type="match status" value="1"/>
</dbReference>
<dbReference type="Pfam" id="PF04998">
    <property type="entry name" value="RNA_pol_Rpb1_5"/>
    <property type="match status" value="1"/>
</dbReference>
<dbReference type="Pfam" id="PF04990">
    <property type="entry name" value="RNA_pol_Rpb1_7"/>
    <property type="match status" value="1"/>
</dbReference>
<dbReference type="SMART" id="SM00663">
    <property type="entry name" value="RPOLA_N"/>
    <property type="match status" value="1"/>
</dbReference>
<dbReference type="SUPFAM" id="SSF64484">
    <property type="entry name" value="beta and beta-prime subunits of DNA dependent RNA-polymerase"/>
    <property type="match status" value="1"/>
</dbReference>
<name>RPB1_ASFP4</name>
<proteinExistence type="inferred from homology"/>
<organism>
    <name type="scientific">African swine fever virus (isolate Tick/South Africa/Pretoriuskop Pr4/1996)</name>
    <name type="common">ASFV</name>
    <dbReference type="NCBI Taxonomy" id="561443"/>
    <lineage>
        <taxon>Viruses</taxon>
        <taxon>Varidnaviria</taxon>
        <taxon>Bamfordvirae</taxon>
        <taxon>Nucleocytoviricota</taxon>
        <taxon>Pokkesviricetes</taxon>
        <taxon>Asfuvirales</taxon>
        <taxon>Asfarviridae</taxon>
        <taxon>Asfivirus</taxon>
        <taxon>African swine fever virus</taxon>
    </lineage>
</organism>
<reference key="1">
    <citation type="submission" date="2003-03" db="EMBL/GenBank/DDBJ databases">
        <title>African swine fever virus genomes.</title>
        <authorList>
            <person name="Kutish G.F."/>
            <person name="Rock D.L."/>
        </authorList>
    </citation>
    <scope>NUCLEOTIDE SEQUENCE [GENOMIC DNA]</scope>
</reference>
<sequence>MEAGYAEIAAVQFNIAGDNDHKRQGVMEVTISNLFEGTLPAEGGIYDARMGTTDHHYKCITCSHQRKQCMGHPGILQMHAPVLQPLFIAEIRRWLRVICLNCGAPIVDLKRYEHLIRPKRLIEAASSQTEGKQCYVCKTVHPKIIKDSEDYFTFWVDQQGKIDKLYPQIIREIFSRVTYDTVVKLGRSKNSHPEKLVLKAIQIPPISIRPGIRLGIGSGPQSFHDINNVIQYLVRKNLLIPKDLQIVRGQKIPLNIDRNLQTIQQLYYNFLLDSVSTTATQGGTGKRGIVMGARPAPSIMRRLPRKEGRIRKSLLGSQVWSISRSTICGNSDLHLDEVGYPISFARTLQVAETVQHYNINRLMPYFLNGKRQYPGCSRVYKQITQSVHDIEGLKQDFRLEVGDILYRDVVTGDVAFFNRQPSLERSSIGVHRIVVLENPKISTFQMNVSACAWYNADFDGDQMNLWVPWSVMSRVEAELLCSVRNWFISTKSSGPVNGQVQDSTVGSFLLTRTNTPMGKNVMNKLHAMGLFQTTQTDPPCFANYSPTDLLDGKSVVSMLLRQTPINYQRAPTWYSEVYAPYMHYNKQDISTQIRNGELIEGVLDKKAVGAGSSGGIYHLISRRYGPQQALKMIFATQQLALNYVRNAGFTVSTADMLLTPEAHQEVQEIINELLLESEEINNRLLHGDIMPPIGLTTHDFYEKLQLNALKFPDRILKPIMNSINPETNGLFQMVATGAKGSNPNMIHIMAGIGQIEINTQRIQPQFSFGRTLVYYPRFALEAQAYGFICNSYIAGLTSPEFIFGEMNGRFDLINKALSTSSTGYANRKAIFGLQSCIVDYYRRVSIDTRLVQQLYGEDGLDARQLETVRFETIMLSDQELEDKFKYTGIQSPLFEEEFSRLKKDRDKYRQIFLNIENFNFSQLLTDVRQVPVNVASIVKNILLSSATGVLPFDEKTILQKYTMVKTFCKNLPYVFINNIQERLQTPIPVYLKRAASLMRMLIRIELATVKTLNITCEQMSAILDLIRLQYTQSLINYGEAVGILAAQSVSEPLTQYMLDSHHRSVAGGTNKSGIVRPQEIFSAKPVEAEQSSEMLLRLKNPEVETNKTYAQEIANSIELITFERLILQWHLLYETYSSTKKNVMYPDFASDVEWMTDFLENHPLLQPPEDIANWCIRLELNKTTMILKSISLESIINSLRAKHPNTYIMHSVENTASGIPIIIRIYLRESAFRRSTNTRMATDEKIAVNVVDKLLNSTIRGIPGIKNANVVKLMRHRVDAQGKLVRLDNIYAIKTNGTNIFGAMLDDNIDPYTIVSSSIGDTMELYGIEAARQKIISEIRTVMGDKGPNHRHLLMYADLMTRTGQVTSLEKAGLNAREPSNVLLRMALSSPVQVLTDAAVDSAVNPIYGIAAPTLMGSVPRIGTMYSDIIMDEKYITENYKSVDSMIDML</sequence>
<feature type="chain" id="PRO_0000373086" description="DNA-directed RNA polymerase RPB1 homolog">
    <location>
        <begin position="1"/>
        <end position="1450"/>
    </location>
</feature>
<evidence type="ECO:0000250" key="1">
    <source>
        <dbReference type="UniProtKB" id="P24928"/>
    </source>
</evidence>
<evidence type="ECO:0000250" key="2">
    <source>
        <dbReference type="UniProtKB" id="P42486"/>
    </source>
</evidence>
<evidence type="ECO:0000305" key="3"/>
<comment type="function">
    <text evidence="1">Catalytic component of the DNA-directed RNA polymerase (RNAP) that catalyzes the transcription in the cytoplasm of viral DNA into RNA using the four ribonucleoside triphosphates as substrates (By similarity). Forms the polymerase active center together with RPB2 (By similarity). Part of the core element with the central large cleft, the clamp element that moves to open and close the cleft and the jaws that are thought to grab the incoming DNA template (By similarity).</text>
</comment>
<comment type="catalytic activity">
    <reaction>
        <text>RNA(n) + a ribonucleoside 5'-triphosphate = RNA(n+1) + diphosphate</text>
        <dbReference type="Rhea" id="RHEA:21248"/>
        <dbReference type="Rhea" id="RHEA-COMP:14527"/>
        <dbReference type="Rhea" id="RHEA-COMP:17342"/>
        <dbReference type="ChEBI" id="CHEBI:33019"/>
        <dbReference type="ChEBI" id="CHEBI:61557"/>
        <dbReference type="ChEBI" id="CHEBI:140395"/>
        <dbReference type="EC" id="2.7.7.6"/>
    </reaction>
</comment>
<comment type="subunit">
    <text evidence="2">Part of the viral DNA-directed RNA polymerase that consists of 8 polII-like subunits (RPB1, RPB2, RPB3, RPB5, RPB6, RPB7, RPB9, RPB10), a capping enzyme and a termination factor.</text>
</comment>
<comment type="subcellular location">
    <subcellularLocation>
        <location>Virion</location>
    </subcellularLocation>
    <text evidence="2">Found in association with viral nucleoid.</text>
</comment>
<comment type="induction">
    <text evidence="3">Expressed in the late phase of the viral replicative cycle.</text>
</comment>
<comment type="domain">
    <text evidence="2">Lacks the typical C-terminal domain (CTD).</text>
</comment>
<comment type="similarity">
    <text evidence="3">Belongs to the RNA polymerase beta' chain family.</text>
</comment>
<organismHost>
    <name type="scientific">Ornithodoros</name>
    <name type="common">relapsing fever ticks</name>
    <dbReference type="NCBI Taxonomy" id="6937"/>
</organismHost>
<organismHost>
    <name type="scientific">Phacochoerus aethiopicus</name>
    <name type="common">Warthog</name>
    <dbReference type="NCBI Taxonomy" id="85517"/>
</organismHost>
<organismHost>
    <name type="scientific">Phacochoerus africanus</name>
    <name type="common">Warthog</name>
    <dbReference type="NCBI Taxonomy" id="41426"/>
</organismHost>
<organismHost>
    <name type="scientific">Potamochoerus larvatus</name>
    <name type="common">Bushpig</name>
    <dbReference type="NCBI Taxonomy" id="273792"/>
</organismHost>
<organismHost>
    <name type="scientific">Sus scrofa</name>
    <name type="common">Pig</name>
    <dbReference type="NCBI Taxonomy" id="9823"/>
</organismHost>